<name>NHAB_VIBPA</name>
<accession>Q87N04</accession>
<accession>P96498</accession>
<keyword id="KW-0050">Antiport</keyword>
<keyword id="KW-0997">Cell inner membrane</keyword>
<keyword id="KW-1003">Cell membrane</keyword>
<keyword id="KW-0406">Ion transport</keyword>
<keyword id="KW-0472">Membrane</keyword>
<keyword id="KW-0915">Sodium</keyword>
<keyword id="KW-0739">Sodium transport</keyword>
<keyword id="KW-0812">Transmembrane</keyword>
<keyword id="KW-1133">Transmembrane helix</keyword>
<keyword id="KW-0813">Transport</keyword>
<reference key="1">
    <citation type="journal article" date="1996" name="Biochem. Biophys. Res. Commun.">
        <title>Cloning and sequencing of the gene for Na+/H+ antiporter of Vibrio parahaemolyticus.</title>
        <authorList>
            <person name="Nozaki K."/>
            <person name="Inaba K."/>
            <person name="Kuroda T."/>
            <person name="Tsuda M."/>
            <person name="Tsuchiya T."/>
        </authorList>
    </citation>
    <scope>NUCLEOTIDE SEQUENCE [GENOMIC DNA]</scope>
    <scope>FUNCTION AS ANTIPORTER</scope>
    <scope>PH DEPENDENCE</scope>
    <source>
        <strain>AQ3334</strain>
    </source>
</reference>
<reference key="2">
    <citation type="journal article" date="2003" name="Lancet">
        <title>Genome sequence of Vibrio parahaemolyticus: a pathogenic mechanism distinct from that of V. cholerae.</title>
        <authorList>
            <person name="Makino K."/>
            <person name="Oshima K."/>
            <person name="Kurokawa K."/>
            <person name="Yokoyama K."/>
            <person name="Uda T."/>
            <person name="Tagomori K."/>
            <person name="Iijima Y."/>
            <person name="Najima M."/>
            <person name="Nakano M."/>
            <person name="Yamashita A."/>
            <person name="Kubota Y."/>
            <person name="Kimura S."/>
            <person name="Yasunaga T."/>
            <person name="Honda T."/>
            <person name="Shinagawa H."/>
            <person name="Hattori M."/>
            <person name="Iida T."/>
        </authorList>
    </citation>
    <scope>NUCLEOTIDE SEQUENCE [LARGE SCALE GENOMIC DNA]</scope>
    <source>
        <strain>RIMD 2210633</strain>
    </source>
</reference>
<reference key="3">
    <citation type="journal article" date="2006" name="Mol. Microbiol.">
        <title>Cloning, functional expression and primary characterization of Vibrio parahaemolyticus K+/H+ antiporter genes in Escherichia coli.</title>
        <authorList>
            <person name="Radchenko M.V."/>
            <person name="Waditee R."/>
            <person name="Oshimi S."/>
            <person name="Fukuhara M."/>
            <person name="Takabe T."/>
            <person name="Nakamura T."/>
        </authorList>
    </citation>
    <scope>FUNCTION</scope>
    <scope>SUBCELLULAR LOCATION</scope>
    <source>
        <strain>RIMD 2210633</strain>
    </source>
</reference>
<sequence>MPISLGNAFIKNFLGKAPDWYKVAIIAFLIINPIVFFLINPFVAGWLLVAEFIFTLAMALKCYPLQPGGLLAIEAIAIGMTSPAQVKHELVANIEVLLLLVFMVAGIYFMKQLLLFIFTKILLGIRSKTLLSLAFCFAAAFLSAFLDALTVIAVVISVAVGFYSIYHKVASGNPIGDHDHTQDDTITELTRDDLENYRAFLRSLLMHAGVGTALGGVTTMVGEPQNLIIADQAGWLFGEFLIRMSPVTLPVFICGLITCALVEKLKVFGYGAKLPDNVRQILVDFDREERKTRTNQDVAKLWVQGIIAVWLIVALALHLAAVGLIGLSVIILATSFTGVIEEHSMGKAFEEALPFTALLAVFFSIVAVIIDQELFKPVIDAVLAVEDKGTQLALFYVANGLLSMVSDNVFVGTVYINEVKSALMEGLITREQFDLLAVAINTGTNLPSVATPNGQAAFLFLLTSALAPLIRLSYGRMVVMALPYTVVLAIVGLMGIMFFLEPATASFYDAGWIAPHTGDLTPVVSGGH</sequence>
<organism>
    <name type="scientific">Vibrio parahaemolyticus serotype O3:K6 (strain RIMD 2210633)</name>
    <dbReference type="NCBI Taxonomy" id="223926"/>
    <lineage>
        <taxon>Bacteria</taxon>
        <taxon>Pseudomonadati</taxon>
        <taxon>Pseudomonadota</taxon>
        <taxon>Gammaproteobacteria</taxon>
        <taxon>Vibrionales</taxon>
        <taxon>Vibrionaceae</taxon>
        <taxon>Vibrio</taxon>
    </lineage>
</organism>
<feature type="chain" id="PRO_0000333149" description="Na(+)/H(+) antiporter NhaB">
    <location>
        <begin position="1"/>
        <end position="528"/>
    </location>
</feature>
<feature type="transmembrane region" description="Helical" evidence="1">
    <location>
        <begin position="23"/>
        <end position="43"/>
    </location>
</feature>
<feature type="transmembrane region" description="Helical" evidence="1">
    <location>
        <begin position="45"/>
        <end position="65"/>
    </location>
</feature>
<feature type="transmembrane region" description="Helical" evidence="1">
    <location>
        <begin position="90"/>
        <end position="110"/>
    </location>
</feature>
<feature type="transmembrane region" description="Helical" evidence="1">
    <location>
        <begin position="136"/>
        <end position="156"/>
    </location>
</feature>
<feature type="transmembrane region" description="Helical" evidence="1">
    <location>
        <begin position="204"/>
        <end position="224"/>
    </location>
</feature>
<feature type="transmembrane region" description="Helical" evidence="1">
    <location>
        <begin position="237"/>
        <end position="257"/>
    </location>
</feature>
<feature type="transmembrane region" description="Helical" evidence="1">
    <location>
        <begin position="305"/>
        <end position="325"/>
    </location>
</feature>
<feature type="transmembrane region" description="Helical" evidence="1">
    <location>
        <begin position="350"/>
        <end position="370"/>
    </location>
</feature>
<feature type="transmembrane region" description="Helical" evidence="1">
    <location>
        <begin position="392"/>
        <end position="412"/>
    </location>
</feature>
<feature type="transmembrane region" description="Helical" evidence="1">
    <location>
        <begin position="450"/>
        <end position="470"/>
    </location>
</feature>
<feature type="transmembrane region" description="Helical" evidence="1">
    <location>
        <begin position="479"/>
        <end position="499"/>
    </location>
</feature>
<feature type="sequence conflict" description="In Ref. 1; BAA12073." evidence="5" ref="1">
    <original>K</original>
    <variation>Q</variation>
    <location>
        <position position="273"/>
    </location>
</feature>
<dbReference type="EMBL" id="D83708">
    <property type="protein sequence ID" value="BAA12073.1"/>
    <property type="molecule type" value="Genomic_DNA"/>
</dbReference>
<dbReference type="EMBL" id="BA000031">
    <property type="protein sequence ID" value="BAC60335.1"/>
    <property type="molecule type" value="Genomic_DNA"/>
</dbReference>
<dbReference type="PIR" id="JC4814">
    <property type="entry name" value="JC4814"/>
</dbReference>
<dbReference type="RefSeq" id="NP_798451.1">
    <property type="nucleotide sequence ID" value="NC_004603.1"/>
</dbReference>
<dbReference type="RefSeq" id="WP_005482404.1">
    <property type="nucleotide sequence ID" value="NC_004603.1"/>
</dbReference>
<dbReference type="SMR" id="Q87N04"/>
<dbReference type="TCDB" id="2.A.34.1.2">
    <property type="family name" value="the nhab na(+):h(+) antiporter (nhab) family"/>
</dbReference>
<dbReference type="GeneID" id="1189583"/>
<dbReference type="KEGG" id="vpa:VP2072"/>
<dbReference type="PATRIC" id="fig|223926.6.peg.1982"/>
<dbReference type="eggNOG" id="COG3067">
    <property type="taxonomic scope" value="Bacteria"/>
</dbReference>
<dbReference type="HOGENOM" id="CLU_041110_0_0_6"/>
<dbReference type="Proteomes" id="UP000002493">
    <property type="component" value="Chromosome 1"/>
</dbReference>
<dbReference type="GO" id="GO:0005886">
    <property type="term" value="C:plasma membrane"/>
    <property type="evidence" value="ECO:0007669"/>
    <property type="project" value="UniProtKB-SubCell"/>
</dbReference>
<dbReference type="GO" id="GO:0015385">
    <property type="term" value="F:sodium:proton antiporter activity"/>
    <property type="evidence" value="ECO:0007669"/>
    <property type="project" value="InterPro"/>
</dbReference>
<dbReference type="HAMAP" id="MF_01599">
    <property type="entry name" value="NhaB"/>
    <property type="match status" value="1"/>
</dbReference>
<dbReference type="InterPro" id="IPR004671">
    <property type="entry name" value="Na+/H+_antiporter_NhaB"/>
</dbReference>
<dbReference type="NCBIfam" id="TIGR00774">
    <property type="entry name" value="NhaB"/>
    <property type="match status" value="1"/>
</dbReference>
<dbReference type="NCBIfam" id="NF007093">
    <property type="entry name" value="PRK09547.1"/>
    <property type="match status" value="1"/>
</dbReference>
<dbReference type="PANTHER" id="PTHR43302:SF1">
    <property type="entry name" value="NA(+)_H(+) ANTIPORTER NHAB"/>
    <property type="match status" value="1"/>
</dbReference>
<dbReference type="PANTHER" id="PTHR43302">
    <property type="entry name" value="TRANSPORTER ARSB-RELATED"/>
    <property type="match status" value="1"/>
</dbReference>
<dbReference type="Pfam" id="PF06450">
    <property type="entry name" value="NhaB"/>
    <property type="match status" value="1"/>
</dbReference>
<proteinExistence type="evidence at protein level"/>
<gene>
    <name evidence="1 4" type="primary">nhaB</name>
    <name type="ordered locus">VP2072</name>
</gene>
<comment type="function">
    <text evidence="2 3">Na(+)/H(+) antiporter that extrudes sodium in exchange for external protons (PubMed:16390457, PubMed:8651921). Can also transport lithium and potassium (PubMed:16390457).</text>
</comment>
<comment type="catalytic activity">
    <reaction evidence="1">
        <text>2 Na(+)(in) + 3 H(+)(out) = 2 Na(+)(out) + 3 H(+)(in)</text>
        <dbReference type="Rhea" id="RHEA:29247"/>
        <dbReference type="ChEBI" id="CHEBI:15378"/>
        <dbReference type="ChEBI" id="CHEBI:29101"/>
    </reaction>
    <physiologicalReaction direction="left-to-right" evidence="1">
        <dbReference type="Rhea" id="RHEA:29248"/>
    </physiologicalReaction>
</comment>
<comment type="biophysicochemical properties">
    <phDependence>
        <text evidence="3">Optimum pH is 8.5. Activity is null at pH 7.0.</text>
    </phDependence>
</comment>
<comment type="subcellular location">
    <subcellularLocation>
        <location evidence="1 2">Cell inner membrane</location>
        <topology evidence="1">Multi-pass membrane protein</topology>
    </subcellularLocation>
</comment>
<comment type="similarity">
    <text evidence="1 5">Belongs to the NhaB Na(+)/H(+) (TC 2.A.34) antiporter family.</text>
</comment>
<evidence type="ECO:0000255" key="1">
    <source>
        <dbReference type="HAMAP-Rule" id="MF_01599"/>
    </source>
</evidence>
<evidence type="ECO:0000269" key="2">
    <source>
    </source>
</evidence>
<evidence type="ECO:0000269" key="3">
    <source>
    </source>
</evidence>
<evidence type="ECO:0000303" key="4">
    <source>
    </source>
</evidence>
<evidence type="ECO:0000305" key="5"/>
<protein>
    <recommendedName>
        <fullName evidence="1 4">Na(+)/H(+) antiporter NhaB</fullName>
    </recommendedName>
    <alternativeName>
        <fullName evidence="1">Sodium/proton antiporter NhaB</fullName>
    </alternativeName>
</protein>